<sequence length="202" mass="23124">MSRYTGSIYKKSRRLGFSLLENNKEFNSGKKRTYGPGQHGNKKVKLSNYGQQLVEKQKLMFLYGLNDRQFRRLYRVALGRPGVLTLNLLQVLESRLDSLVYRAGFAPTRRAARQLVNHSHVLVNNKKVNIPSALVEVGSTIALKAKSLEIPLIKNTLNKPADFIELIDKEKKVAKLARLPERNELPADVNEAYVVEWYNRLM</sequence>
<organism>
    <name type="scientific">Ureaplasma parvum serovar 3 (strain ATCC 700970)</name>
    <dbReference type="NCBI Taxonomy" id="273119"/>
    <lineage>
        <taxon>Bacteria</taxon>
        <taxon>Bacillati</taxon>
        <taxon>Mycoplasmatota</taxon>
        <taxon>Mycoplasmoidales</taxon>
        <taxon>Mycoplasmoidaceae</taxon>
        <taxon>Ureaplasma</taxon>
    </lineage>
</organism>
<comment type="function">
    <text evidence="1">One of the primary rRNA binding proteins, it binds directly to 16S rRNA where it nucleates assembly of the body of the 30S subunit.</text>
</comment>
<comment type="function">
    <text evidence="1">With S5 and S12 plays an important role in translational accuracy.</text>
</comment>
<comment type="subunit">
    <text evidence="1">Part of the 30S ribosomal subunit. Contacts protein S5. The interaction surface between S4 and S5 is involved in control of translational fidelity.</text>
</comment>
<comment type="similarity">
    <text evidence="1">Belongs to the universal ribosomal protein uS4 family.</text>
</comment>
<name>RS4_UREPA</name>
<gene>
    <name evidence="1" type="primary">rpsD</name>
    <name evidence="1" type="synonym">rps4</name>
    <name type="ordered locus">UU498</name>
</gene>
<feature type="chain" id="PRO_0000132489" description="Small ribosomal subunit protein uS4">
    <location>
        <begin position="1"/>
        <end position="202"/>
    </location>
</feature>
<feature type="domain" description="S4 RNA-binding" evidence="1">
    <location>
        <begin position="94"/>
        <end position="157"/>
    </location>
</feature>
<proteinExistence type="inferred from homology"/>
<keyword id="KW-1185">Reference proteome</keyword>
<keyword id="KW-0687">Ribonucleoprotein</keyword>
<keyword id="KW-0689">Ribosomal protein</keyword>
<keyword id="KW-0694">RNA-binding</keyword>
<keyword id="KW-0699">rRNA-binding</keyword>
<protein>
    <recommendedName>
        <fullName evidence="1">Small ribosomal subunit protein uS4</fullName>
    </recommendedName>
    <alternativeName>
        <fullName evidence="2">30S ribosomal protein S4</fullName>
    </alternativeName>
</protein>
<dbReference type="EMBL" id="AF222894">
    <property type="protein sequence ID" value="AAF30910.1"/>
    <property type="molecule type" value="Genomic_DNA"/>
</dbReference>
<dbReference type="RefSeq" id="WP_006688490.1">
    <property type="nucleotide sequence ID" value="NC_002162.1"/>
</dbReference>
<dbReference type="SMR" id="Q9PPZ2"/>
<dbReference type="STRING" id="273119.UU498"/>
<dbReference type="EnsemblBacteria" id="AAF30910">
    <property type="protein sequence ID" value="AAF30910"/>
    <property type="gene ID" value="UU498"/>
</dbReference>
<dbReference type="GeneID" id="29672308"/>
<dbReference type="KEGG" id="uur:UU498"/>
<dbReference type="eggNOG" id="COG0522">
    <property type="taxonomic scope" value="Bacteria"/>
</dbReference>
<dbReference type="HOGENOM" id="CLU_092403_0_1_14"/>
<dbReference type="OrthoDB" id="9803672at2"/>
<dbReference type="Proteomes" id="UP000000423">
    <property type="component" value="Chromosome"/>
</dbReference>
<dbReference type="GO" id="GO:0015935">
    <property type="term" value="C:small ribosomal subunit"/>
    <property type="evidence" value="ECO:0007669"/>
    <property type="project" value="InterPro"/>
</dbReference>
<dbReference type="GO" id="GO:0019843">
    <property type="term" value="F:rRNA binding"/>
    <property type="evidence" value="ECO:0007669"/>
    <property type="project" value="UniProtKB-UniRule"/>
</dbReference>
<dbReference type="GO" id="GO:0003735">
    <property type="term" value="F:structural constituent of ribosome"/>
    <property type="evidence" value="ECO:0007669"/>
    <property type="project" value="InterPro"/>
</dbReference>
<dbReference type="GO" id="GO:0042274">
    <property type="term" value="P:ribosomal small subunit biogenesis"/>
    <property type="evidence" value="ECO:0007669"/>
    <property type="project" value="TreeGrafter"/>
</dbReference>
<dbReference type="GO" id="GO:0006412">
    <property type="term" value="P:translation"/>
    <property type="evidence" value="ECO:0007669"/>
    <property type="project" value="UniProtKB-UniRule"/>
</dbReference>
<dbReference type="CDD" id="cd00165">
    <property type="entry name" value="S4"/>
    <property type="match status" value="1"/>
</dbReference>
<dbReference type="FunFam" id="3.10.290.10:FF:000001">
    <property type="entry name" value="30S ribosomal protein S4"/>
    <property type="match status" value="1"/>
</dbReference>
<dbReference type="Gene3D" id="1.10.1050.10">
    <property type="entry name" value="Ribosomal Protein S4 Delta 41, Chain A, domain 1"/>
    <property type="match status" value="1"/>
</dbReference>
<dbReference type="Gene3D" id="3.10.290.10">
    <property type="entry name" value="RNA-binding S4 domain"/>
    <property type="match status" value="1"/>
</dbReference>
<dbReference type="HAMAP" id="MF_01306_B">
    <property type="entry name" value="Ribosomal_uS4_B"/>
    <property type="match status" value="1"/>
</dbReference>
<dbReference type="InterPro" id="IPR022801">
    <property type="entry name" value="Ribosomal_uS4"/>
</dbReference>
<dbReference type="InterPro" id="IPR005709">
    <property type="entry name" value="Ribosomal_uS4_bac-type"/>
</dbReference>
<dbReference type="InterPro" id="IPR018079">
    <property type="entry name" value="Ribosomal_uS4_CS"/>
</dbReference>
<dbReference type="InterPro" id="IPR001912">
    <property type="entry name" value="Ribosomal_uS4_N"/>
</dbReference>
<dbReference type="InterPro" id="IPR002942">
    <property type="entry name" value="S4_RNA-bd"/>
</dbReference>
<dbReference type="InterPro" id="IPR036986">
    <property type="entry name" value="S4_RNA-bd_sf"/>
</dbReference>
<dbReference type="NCBIfam" id="NF003717">
    <property type="entry name" value="PRK05327.1"/>
    <property type="match status" value="1"/>
</dbReference>
<dbReference type="NCBIfam" id="TIGR01017">
    <property type="entry name" value="rpsD_bact"/>
    <property type="match status" value="1"/>
</dbReference>
<dbReference type="PANTHER" id="PTHR11831">
    <property type="entry name" value="30S 40S RIBOSOMAL PROTEIN"/>
    <property type="match status" value="1"/>
</dbReference>
<dbReference type="PANTHER" id="PTHR11831:SF4">
    <property type="entry name" value="SMALL RIBOSOMAL SUBUNIT PROTEIN US4M"/>
    <property type="match status" value="1"/>
</dbReference>
<dbReference type="Pfam" id="PF00163">
    <property type="entry name" value="Ribosomal_S4"/>
    <property type="match status" value="1"/>
</dbReference>
<dbReference type="Pfam" id="PF01479">
    <property type="entry name" value="S4"/>
    <property type="match status" value="1"/>
</dbReference>
<dbReference type="SMART" id="SM01390">
    <property type="entry name" value="Ribosomal_S4"/>
    <property type="match status" value="1"/>
</dbReference>
<dbReference type="SMART" id="SM00363">
    <property type="entry name" value="S4"/>
    <property type="match status" value="1"/>
</dbReference>
<dbReference type="SUPFAM" id="SSF55174">
    <property type="entry name" value="Alpha-L RNA-binding motif"/>
    <property type="match status" value="1"/>
</dbReference>
<dbReference type="PROSITE" id="PS00632">
    <property type="entry name" value="RIBOSOMAL_S4"/>
    <property type="match status" value="1"/>
</dbReference>
<dbReference type="PROSITE" id="PS50889">
    <property type="entry name" value="S4"/>
    <property type="match status" value="1"/>
</dbReference>
<accession>Q9PPZ2</accession>
<evidence type="ECO:0000255" key="1">
    <source>
        <dbReference type="HAMAP-Rule" id="MF_01306"/>
    </source>
</evidence>
<evidence type="ECO:0000305" key="2"/>
<reference key="1">
    <citation type="journal article" date="2000" name="Nature">
        <title>The complete sequence of the mucosal pathogen Ureaplasma urealyticum.</title>
        <authorList>
            <person name="Glass J.I."/>
            <person name="Lefkowitz E.J."/>
            <person name="Glass J.S."/>
            <person name="Heiner C.R."/>
            <person name="Chen E.Y."/>
            <person name="Cassell G.H."/>
        </authorList>
    </citation>
    <scope>NUCLEOTIDE SEQUENCE [LARGE SCALE GENOMIC DNA]</scope>
    <source>
        <strain>ATCC 700970</strain>
    </source>
</reference>